<protein>
    <recommendedName>
        <fullName evidence="1">Phosphoglycerate kinase</fullName>
        <ecNumber evidence="1">2.7.2.3</ecNumber>
    </recommendedName>
</protein>
<accession>A4TI90</accession>
<dbReference type="EC" id="2.7.2.3" evidence="1"/>
<dbReference type="EMBL" id="CP000668">
    <property type="protein sequence ID" value="ABP39002.1"/>
    <property type="molecule type" value="Genomic_DNA"/>
</dbReference>
<dbReference type="RefSeq" id="WP_002209963.1">
    <property type="nucleotide sequence ID" value="NZ_CP009715.1"/>
</dbReference>
<dbReference type="SMR" id="A4TI90"/>
<dbReference type="GeneID" id="57973719"/>
<dbReference type="KEGG" id="ypp:YPDSF_0592"/>
<dbReference type="PATRIC" id="fig|386656.14.peg.1911"/>
<dbReference type="UniPathway" id="UPA00109">
    <property type="reaction ID" value="UER00185"/>
</dbReference>
<dbReference type="GO" id="GO:0005829">
    <property type="term" value="C:cytosol"/>
    <property type="evidence" value="ECO:0007669"/>
    <property type="project" value="TreeGrafter"/>
</dbReference>
<dbReference type="GO" id="GO:0043531">
    <property type="term" value="F:ADP binding"/>
    <property type="evidence" value="ECO:0007669"/>
    <property type="project" value="TreeGrafter"/>
</dbReference>
<dbReference type="GO" id="GO:0005524">
    <property type="term" value="F:ATP binding"/>
    <property type="evidence" value="ECO:0007669"/>
    <property type="project" value="UniProtKB-KW"/>
</dbReference>
<dbReference type="GO" id="GO:0004618">
    <property type="term" value="F:phosphoglycerate kinase activity"/>
    <property type="evidence" value="ECO:0007669"/>
    <property type="project" value="UniProtKB-UniRule"/>
</dbReference>
<dbReference type="GO" id="GO:0006094">
    <property type="term" value="P:gluconeogenesis"/>
    <property type="evidence" value="ECO:0007669"/>
    <property type="project" value="TreeGrafter"/>
</dbReference>
<dbReference type="GO" id="GO:0006096">
    <property type="term" value="P:glycolytic process"/>
    <property type="evidence" value="ECO:0007669"/>
    <property type="project" value="UniProtKB-UniRule"/>
</dbReference>
<dbReference type="FunFam" id="3.40.50.1260:FF:000001">
    <property type="entry name" value="Phosphoglycerate kinase"/>
    <property type="match status" value="1"/>
</dbReference>
<dbReference type="FunFam" id="3.40.50.1260:FF:000002">
    <property type="entry name" value="Phosphoglycerate kinase"/>
    <property type="match status" value="1"/>
</dbReference>
<dbReference type="Gene3D" id="3.40.50.1260">
    <property type="entry name" value="Phosphoglycerate kinase, N-terminal domain"/>
    <property type="match status" value="2"/>
</dbReference>
<dbReference type="HAMAP" id="MF_00145">
    <property type="entry name" value="Phosphoglyc_kinase"/>
    <property type="match status" value="1"/>
</dbReference>
<dbReference type="InterPro" id="IPR001576">
    <property type="entry name" value="Phosphoglycerate_kinase"/>
</dbReference>
<dbReference type="InterPro" id="IPR015911">
    <property type="entry name" value="Phosphoglycerate_kinase_CS"/>
</dbReference>
<dbReference type="InterPro" id="IPR015824">
    <property type="entry name" value="Phosphoglycerate_kinase_N"/>
</dbReference>
<dbReference type="InterPro" id="IPR036043">
    <property type="entry name" value="Phosphoglycerate_kinase_sf"/>
</dbReference>
<dbReference type="PANTHER" id="PTHR11406">
    <property type="entry name" value="PHOSPHOGLYCERATE KINASE"/>
    <property type="match status" value="1"/>
</dbReference>
<dbReference type="PANTHER" id="PTHR11406:SF23">
    <property type="entry name" value="PHOSPHOGLYCERATE KINASE 1, CHLOROPLASTIC-RELATED"/>
    <property type="match status" value="1"/>
</dbReference>
<dbReference type="Pfam" id="PF00162">
    <property type="entry name" value="PGK"/>
    <property type="match status" value="1"/>
</dbReference>
<dbReference type="PIRSF" id="PIRSF000724">
    <property type="entry name" value="Pgk"/>
    <property type="match status" value="1"/>
</dbReference>
<dbReference type="PRINTS" id="PR00477">
    <property type="entry name" value="PHGLYCKINASE"/>
</dbReference>
<dbReference type="SUPFAM" id="SSF53748">
    <property type="entry name" value="Phosphoglycerate kinase"/>
    <property type="match status" value="1"/>
</dbReference>
<dbReference type="PROSITE" id="PS00111">
    <property type="entry name" value="PGLYCERATE_KINASE"/>
    <property type="match status" value="1"/>
</dbReference>
<sequence>MSVIKMTDLDLAGKRVLIRADLNVPVKEGKVTSDARIRASLPTIEAALKQGAKVMVTSHLGRPTEGEYNEEFSLLPVVNYLKEKLSSPVRLAKDYLDGVEIAAGELVVLENVRFNKGEKKDDEALSKKYAALCDVYVMDAFGTAHRAQASTHGVGKFAPIACAGPLLSAELEALGKALGNPARPMVAIVGGSKVSTKLTVLGALSKIADKLIVGGGIANTFVAAQGHNVGKSLYEADLIPEAKRLLETCDIPVPTDVRVATEFSETAAATLKPANEIKDDEQILDLGDESAERLAEILKNAKTILWNGPVGVFEFPNFRKGTEIVARAIAESEAFSIAGGGDTLAAIDLFGIADQISYISTGGGAFLEFVEGKKLPAVVMLEERAKQ</sequence>
<comment type="catalytic activity">
    <reaction evidence="1">
        <text>(2R)-3-phosphoglycerate + ATP = (2R)-3-phospho-glyceroyl phosphate + ADP</text>
        <dbReference type="Rhea" id="RHEA:14801"/>
        <dbReference type="ChEBI" id="CHEBI:30616"/>
        <dbReference type="ChEBI" id="CHEBI:57604"/>
        <dbReference type="ChEBI" id="CHEBI:58272"/>
        <dbReference type="ChEBI" id="CHEBI:456216"/>
        <dbReference type="EC" id="2.7.2.3"/>
    </reaction>
</comment>
<comment type="pathway">
    <text evidence="1">Carbohydrate degradation; glycolysis; pyruvate from D-glyceraldehyde 3-phosphate: step 2/5.</text>
</comment>
<comment type="subunit">
    <text evidence="1">Monomer.</text>
</comment>
<comment type="subcellular location">
    <subcellularLocation>
        <location evidence="1">Cytoplasm</location>
    </subcellularLocation>
</comment>
<comment type="similarity">
    <text evidence="1">Belongs to the phosphoglycerate kinase family.</text>
</comment>
<feature type="chain" id="PRO_1000058099" description="Phosphoglycerate kinase">
    <location>
        <begin position="1"/>
        <end position="387"/>
    </location>
</feature>
<feature type="binding site" evidence="1">
    <location>
        <begin position="21"/>
        <end position="23"/>
    </location>
    <ligand>
        <name>substrate</name>
    </ligand>
</feature>
<feature type="binding site" evidence="1">
    <location>
        <position position="36"/>
    </location>
    <ligand>
        <name>substrate</name>
    </ligand>
</feature>
<feature type="binding site" evidence="1">
    <location>
        <begin position="59"/>
        <end position="62"/>
    </location>
    <ligand>
        <name>substrate</name>
    </ligand>
</feature>
<feature type="binding site" evidence="1">
    <location>
        <position position="113"/>
    </location>
    <ligand>
        <name>substrate</name>
    </ligand>
</feature>
<feature type="binding site" evidence="1">
    <location>
        <position position="146"/>
    </location>
    <ligand>
        <name>substrate</name>
    </ligand>
</feature>
<feature type="binding site" evidence="1">
    <location>
        <position position="197"/>
    </location>
    <ligand>
        <name>ATP</name>
        <dbReference type="ChEBI" id="CHEBI:30616"/>
    </ligand>
</feature>
<feature type="binding site" evidence="1">
    <location>
        <position position="314"/>
    </location>
    <ligand>
        <name>ATP</name>
        <dbReference type="ChEBI" id="CHEBI:30616"/>
    </ligand>
</feature>
<feature type="binding site" evidence="1">
    <location>
        <begin position="340"/>
        <end position="343"/>
    </location>
    <ligand>
        <name>ATP</name>
        <dbReference type="ChEBI" id="CHEBI:30616"/>
    </ligand>
</feature>
<reference key="1">
    <citation type="submission" date="2007-02" db="EMBL/GenBank/DDBJ databases">
        <title>Complete sequence of chromosome of Yersinia pestis Pestoides F.</title>
        <authorList>
            <consortium name="US DOE Joint Genome Institute"/>
            <person name="Copeland A."/>
            <person name="Lucas S."/>
            <person name="Lapidus A."/>
            <person name="Barry K."/>
            <person name="Detter J.C."/>
            <person name="Glavina del Rio T."/>
            <person name="Hammon N."/>
            <person name="Israni S."/>
            <person name="Dalin E."/>
            <person name="Tice H."/>
            <person name="Pitluck S."/>
            <person name="Di Bartolo G."/>
            <person name="Chain P."/>
            <person name="Malfatti S."/>
            <person name="Shin M."/>
            <person name="Vergez L."/>
            <person name="Schmutz J."/>
            <person name="Larimer F."/>
            <person name="Land M."/>
            <person name="Hauser L."/>
            <person name="Worsham P."/>
            <person name="Chu M."/>
            <person name="Bearden S."/>
            <person name="Garcia E."/>
            <person name="Richardson P."/>
        </authorList>
    </citation>
    <scope>NUCLEOTIDE SEQUENCE [LARGE SCALE GENOMIC DNA]</scope>
    <source>
        <strain>Pestoides F</strain>
    </source>
</reference>
<name>PGK_YERPP</name>
<keyword id="KW-0067">ATP-binding</keyword>
<keyword id="KW-0963">Cytoplasm</keyword>
<keyword id="KW-0324">Glycolysis</keyword>
<keyword id="KW-0418">Kinase</keyword>
<keyword id="KW-0547">Nucleotide-binding</keyword>
<keyword id="KW-0808">Transferase</keyword>
<evidence type="ECO:0000255" key="1">
    <source>
        <dbReference type="HAMAP-Rule" id="MF_00145"/>
    </source>
</evidence>
<proteinExistence type="inferred from homology"/>
<gene>
    <name evidence="1" type="primary">pgk</name>
    <name type="ordered locus">YPDSF_0592</name>
</gene>
<organism>
    <name type="scientific">Yersinia pestis (strain Pestoides F)</name>
    <dbReference type="NCBI Taxonomy" id="386656"/>
    <lineage>
        <taxon>Bacteria</taxon>
        <taxon>Pseudomonadati</taxon>
        <taxon>Pseudomonadota</taxon>
        <taxon>Gammaproteobacteria</taxon>
        <taxon>Enterobacterales</taxon>
        <taxon>Yersiniaceae</taxon>
        <taxon>Yersinia</taxon>
    </lineage>
</organism>